<evidence type="ECO:0000255" key="1">
    <source>
        <dbReference type="HAMAP-Rule" id="MF_00372"/>
    </source>
</evidence>
<organism>
    <name type="scientific">Hahella chejuensis (strain KCTC 2396)</name>
    <dbReference type="NCBI Taxonomy" id="349521"/>
    <lineage>
        <taxon>Bacteria</taxon>
        <taxon>Pseudomonadati</taxon>
        <taxon>Pseudomonadota</taxon>
        <taxon>Gammaproteobacteria</taxon>
        <taxon>Oceanospirillales</taxon>
        <taxon>Hahellaceae</taxon>
        <taxon>Hahella</taxon>
    </lineage>
</organism>
<gene>
    <name evidence="1" type="primary">hutI</name>
    <name type="ordered locus">HCH_04169</name>
</gene>
<keyword id="KW-0963">Cytoplasm</keyword>
<keyword id="KW-0369">Histidine metabolism</keyword>
<keyword id="KW-0378">Hydrolase</keyword>
<keyword id="KW-0408">Iron</keyword>
<keyword id="KW-0479">Metal-binding</keyword>
<keyword id="KW-1185">Reference proteome</keyword>
<keyword id="KW-0862">Zinc</keyword>
<feature type="chain" id="PRO_0000306465" description="Imidazolonepropionase">
    <location>
        <begin position="1"/>
        <end position="403"/>
    </location>
</feature>
<feature type="binding site" evidence="1">
    <location>
        <position position="68"/>
    </location>
    <ligand>
        <name>Fe(3+)</name>
        <dbReference type="ChEBI" id="CHEBI:29034"/>
    </ligand>
</feature>
<feature type="binding site" evidence="1">
    <location>
        <position position="68"/>
    </location>
    <ligand>
        <name>Zn(2+)</name>
        <dbReference type="ChEBI" id="CHEBI:29105"/>
    </ligand>
</feature>
<feature type="binding site" evidence="1">
    <location>
        <position position="70"/>
    </location>
    <ligand>
        <name>Fe(3+)</name>
        <dbReference type="ChEBI" id="CHEBI:29034"/>
    </ligand>
</feature>
<feature type="binding site" evidence="1">
    <location>
        <position position="70"/>
    </location>
    <ligand>
        <name>Zn(2+)</name>
        <dbReference type="ChEBI" id="CHEBI:29105"/>
    </ligand>
</feature>
<feature type="binding site" evidence="1">
    <location>
        <position position="77"/>
    </location>
    <ligand>
        <name>4-imidazolone-5-propanoate</name>
        <dbReference type="ChEBI" id="CHEBI:77893"/>
    </ligand>
</feature>
<feature type="binding site" evidence="1">
    <location>
        <position position="140"/>
    </location>
    <ligand>
        <name>4-imidazolone-5-propanoate</name>
        <dbReference type="ChEBI" id="CHEBI:77893"/>
    </ligand>
</feature>
<feature type="binding site" evidence="1">
    <location>
        <position position="140"/>
    </location>
    <ligand>
        <name>N-formimidoyl-L-glutamate</name>
        <dbReference type="ChEBI" id="CHEBI:58928"/>
    </ligand>
</feature>
<feature type="binding site" evidence="1">
    <location>
        <position position="173"/>
    </location>
    <ligand>
        <name>4-imidazolone-5-propanoate</name>
        <dbReference type="ChEBI" id="CHEBI:77893"/>
    </ligand>
</feature>
<feature type="binding site" evidence="1">
    <location>
        <position position="238"/>
    </location>
    <ligand>
        <name>Fe(3+)</name>
        <dbReference type="ChEBI" id="CHEBI:29034"/>
    </ligand>
</feature>
<feature type="binding site" evidence="1">
    <location>
        <position position="238"/>
    </location>
    <ligand>
        <name>Zn(2+)</name>
        <dbReference type="ChEBI" id="CHEBI:29105"/>
    </ligand>
</feature>
<feature type="binding site" evidence="1">
    <location>
        <position position="241"/>
    </location>
    <ligand>
        <name>4-imidazolone-5-propanoate</name>
        <dbReference type="ChEBI" id="CHEBI:77893"/>
    </ligand>
</feature>
<feature type="binding site" evidence="1">
    <location>
        <position position="313"/>
    </location>
    <ligand>
        <name>Fe(3+)</name>
        <dbReference type="ChEBI" id="CHEBI:29034"/>
    </ligand>
</feature>
<feature type="binding site" evidence="1">
    <location>
        <position position="313"/>
    </location>
    <ligand>
        <name>Zn(2+)</name>
        <dbReference type="ChEBI" id="CHEBI:29105"/>
    </ligand>
</feature>
<feature type="binding site" evidence="1">
    <location>
        <position position="315"/>
    </location>
    <ligand>
        <name>N-formimidoyl-L-glutamate</name>
        <dbReference type="ChEBI" id="CHEBI:58928"/>
    </ligand>
</feature>
<feature type="binding site" evidence="1">
    <location>
        <position position="317"/>
    </location>
    <ligand>
        <name>N-formimidoyl-L-glutamate</name>
        <dbReference type="ChEBI" id="CHEBI:58928"/>
    </ligand>
</feature>
<feature type="binding site" evidence="1">
    <location>
        <position position="318"/>
    </location>
    <ligand>
        <name>4-imidazolone-5-propanoate</name>
        <dbReference type="ChEBI" id="CHEBI:77893"/>
    </ligand>
</feature>
<accession>Q2SEP8</accession>
<reference key="1">
    <citation type="journal article" date="2005" name="Nucleic Acids Res.">
        <title>Genomic blueprint of Hahella chejuensis, a marine microbe producing an algicidal agent.</title>
        <authorList>
            <person name="Jeong H."/>
            <person name="Yim J.H."/>
            <person name="Lee C."/>
            <person name="Choi S.-H."/>
            <person name="Park Y.K."/>
            <person name="Yoon S.H."/>
            <person name="Hur C.-G."/>
            <person name="Kang H.-Y."/>
            <person name="Kim D."/>
            <person name="Lee H.H."/>
            <person name="Park K.H."/>
            <person name="Park S.-H."/>
            <person name="Park H.-S."/>
            <person name="Lee H.K."/>
            <person name="Oh T.K."/>
            <person name="Kim J.F."/>
        </authorList>
    </citation>
    <scope>NUCLEOTIDE SEQUENCE [LARGE SCALE GENOMIC DNA]</scope>
    <source>
        <strain>KCTC 2396</strain>
    </source>
</reference>
<comment type="function">
    <text evidence="1">Catalyzes the hydrolytic cleavage of the carbon-nitrogen bond in imidazolone-5-propanoate to yield N-formimidoyl-L-glutamate. It is the third step in the universal histidine degradation pathway.</text>
</comment>
<comment type="catalytic activity">
    <reaction evidence="1">
        <text>4-imidazolone-5-propanoate + H2O = N-formimidoyl-L-glutamate</text>
        <dbReference type="Rhea" id="RHEA:23660"/>
        <dbReference type="ChEBI" id="CHEBI:15377"/>
        <dbReference type="ChEBI" id="CHEBI:58928"/>
        <dbReference type="ChEBI" id="CHEBI:77893"/>
        <dbReference type="EC" id="3.5.2.7"/>
    </reaction>
</comment>
<comment type="cofactor">
    <cofactor evidence="1">
        <name>Zn(2+)</name>
        <dbReference type="ChEBI" id="CHEBI:29105"/>
    </cofactor>
    <cofactor evidence="1">
        <name>Fe(3+)</name>
        <dbReference type="ChEBI" id="CHEBI:29034"/>
    </cofactor>
    <text evidence="1">Binds 1 zinc or iron ion per subunit.</text>
</comment>
<comment type="pathway">
    <text evidence="1">Amino-acid degradation; L-histidine degradation into L-glutamate; N-formimidoyl-L-glutamate from L-histidine: step 3/3.</text>
</comment>
<comment type="subcellular location">
    <subcellularLocation>
        <location evidence="1">Cytoplasm</location>
    </subcellularLocation>
</comment>
<comment type="similarity">
    <text evidence="1">Belongs to the metallo-dependent hydrolases superfamily. HutI family.</text>
</comment>
<sequence length="403" mass="43948">MDWWINARIATLDPDAQHAYGLLESHALGVAHGKVEAIVPMSEWDGDASDNITDANGRLITPGLVDCHTHLVYGGDRAAEFEMRLQGVSYADIAKQGGGIISTVRATRAATEKELLQQSEKRLLALLREGVTTVEIKSGYGLDLESELKMLHVARRLGQRYPVNVRTTLLAAHALPPEYAGRSDDYISWICEEALPVAHEQKLADAVDVFCESIAFTPEQCRRVFEAAQKLGLPVKGHMEQLTLSGGSALAAEFNALSVDHVEYLDEASVQAIAASGTVATLLPGAFYFLRETQRPPMELLRKHKVPMALATDLNPGSCPLASMRLMMNMGCTFFGMTPEETLAGVTRHGAKALGMQDRIGHLAPGMAADFIVWDCQHPAQLSYEFGVTGPHQRVFHGEIHNV</sequence>
<protein>
    <recommendedName>
        <fullName evidence="1">Imidazolonepropionase</fullName>
        <ecNumber evidence="1">3.5.2.7</ecNumber>
    </recommendedName>
    <alternativeName>
        <fullName evidence="1">Imidazolone-5-propionate hydrolase</fullName>
    </alternativeName>
</protein>
<proteinExistence type="inferred from homology"/>
<dbReference type="EC" id="3.5.2.7" evidence="1"/>
<dbReference type="EMBL" id="CP000155">
    <property type="protein sequence ID" value="ABC30876.1"/>
    <property type="molecule type" value="Genomic_DNA"/>
</dbReference>
<dbReference type="RefSeq" id="WP_011397943.1">
    <property type="nucleotide sequence ID" value="NC_007645.1"/>
</dbReference>
<dbReference type="SMR" id="Q2SEP8"/>
<dbReference type="STRING" id="349521.HCH_04169"/>
<dbReference type="KEGG" id="hch:HCH_04169"/>
<dbReference type="eggNOG" id="COG1228">
    <property type="taxonomic scope" value="Bacteria"/>
</dbReference>
<dbReference type="HOGENOM" id="CLU_041647_0_0_6"/>
<dbReference type="OrthoDB" id="9776455at2"/>
<dbReference type="UniPathway" id="UPA00379">
    <property type="reaction ID" value="UER00551"/>
</dbReference>
<dbReference type="Proteomes" id="UP000000238">
    <property type="component" value="Chromosome"/>
</dbReference>
<dbReference type="GO" id="GO:0005737">
    <property type="term" value="C:cytoplasm"/>
    <property type="evidence" value="ECO:0007669"/>
    <property type="project" value="UniProtKB-SubCell"/>
</dbReference>
<dbReference type="GO" id="GO:0050480">
    <property type="term" value="F:imidazolonepropionase activity"/>
    <property type="evidence" value="ECO:0007669"/>
    <property type="project" value="UniProtKB-UniRule"/>
</dbReference>
<dbReference type="GO" id="GO:0005506">
    <property type="term" value="F:iron ion binding"/>
    <property type="evidence" value="ECO:0007669"/>
    <property type="project" value="UniProtKB-UniRule"/>
</dbReference>
<dbReference type="GO" id="GO:0008270">
    <property type="term" value="F:zinc ion binding"/>
    <property type="evidence" value="ECO:0007669"/>
    <property type="project" value="UniProtKB-UniRule"/>
</dbReference>
<dbReference type="GO" id="GO:0019556">
    <property type="term" value="P:L-histidine catabolic process to glutamate and formamide"/>
    <property type="evidence" value="ECO:0007669"/>
    <property type="project" value="UniProtKB-UniPathway"/>
</dbReference>
<dbReference type="GO" id="GO:0019557">
    <property type="term" value="P:L-histidine catabolic process to glutamate and formate"/>
    <property type="evidence" value="ECO:0007669"/>
    <property type="project" value="UniProtKB-UniPathway"/>
</dbReference>
<dbReference type="CDD" id="cd01296">
    <property type="entry name" value="Imidazolone-5PH"/>
    <property type="match status" value="1"/>
</dbReference>
<dbReference type="FunFam" id="3.20.20.140:FF:000007">
    <property type="entry name" value="Imidazolonepropionase"/>
    <property type="match status" value="1"/>
</dbReference>
<dbReference type="Gene3D" id="3.20.20.140">
    <property type="entry name" value="Metal-dependent hydrolases"/>
    <property type="match status" value="1"/>
</dbReference>
<dbReference type="Gene3D" id="2.30.40.10">
    <property type="entry name" value="Urease, subunit C, domain 1"/>
    <property type="match status" value="1"/>
</dbReference>
<dbReference type="HAMAP" id="MF_00372">
    <property type="entry name" value="HutI"/>
    <property type="match status" value="1"/>
</dbReference>
<dbReference type="InterPro" id="IPR006680">
    <property type="entry name" value="Amidohydro-rel"/>
</dbReference>
<dbReference type="InterPro" id="IPR005920">
    <property type="entry name" value="HutI"/>
</dbReference>
<dbReference type="InterPro" id="IPR011059">
    <property type="entry name" value="Metal-dep_hydrolase_composite"/>
</dbReference>
<dbReference type="InterPro" id="IPR032466">
    <property type="entry name" value="Metal_Hydrolase"/>
</dbReference>
<dbReference type="NCBIfam" id="TIGR01224">
    <property type="entry name" value="hutI"/>
    <property type="match status" value="1"/>
</dbReference>
<dbReference type="PANTHER" id="PTHR42752">
    <property type="entry name" value="IMIDAZOLONEPROPIONASE"/>
    <property type="match status" value="1"/>
</dbReference>
<dbReference type="PANTHER" id="PTHR42752:SF1">
    <property type="entry name" value="IMIDAZOLONEPROPIONASE-RELATED"/>
    <property type="match status" value="1"/>
</dbReference>
<dbReference type="Pfam" id="PF01979">
    <property type="entry name" value="Amidohydro_1"/>
    <property type="match status" value="1"/>
</dbReference>
<dbReference type="SUPFAM" id="SSF51338">
    <property type="entry name" value="Composite domain of metallo-dependent hydrolases"/>
    <property type="match status" value="1"/>
</dbReference>
<dbReference type="SUPFAM" id="SSF51556">
    <property type="entry name" value="Metallo-dependent hydrolases"/>
    <property type="match status" value="1"/>
</dbReference>
<name>HUTI_HAHCH</name>